<organism evidence="12">
    <name type="scientific">Drosophila melanogaster</name>
    <name type="common">Fruit fly</name>
    <dbReference type="NCBI Taxonomy" id="7227"/>
    <lineage>
        <taxon>Eukaryota</taxon>
        <taxon>Metazoa</taxon>
        <taxon>Ecdysozoa</taxon>
        <taxon>Arthropoda</taxon>
        <taxon>Hexapoda</taxon>
        <taxon>Insecta</taxon>
        <taxon>Pterygota</taxon>
        <taxon>Neoptera</taxon>
        <taxon>Endopterygota</taxon>
        <taxon>Diptera</taxon>
        <taxon>Brachycera</taxon>
        <taxon>Muscomorpha</taxon>
        <taxon>Ephydroidea</taxon>
        <taxon>Drosophilidae</taxon>
        <taxon>Drosophila</taxon>
        <taxon>Sophophora</taxon>
    </lineage>
</organism>
<dbReference type="EMBL" id="AY142215">
    <property type="protein sequence ID" value="AAN52143.1"/>
    <property type="status" value="ALT_INIT"/>
    <property type="molecule type" value="mRNA"/>
</dbReference>
<dbReference type="EMBL" id="AE014297">
    <property type="protein sequence ID" value="AAF54741.1"/>
    <property type="molecule type" value="Genomic_DNA"/>
</dbReference>
<dbReference type="EMBL" id="BT025228">
    <property type="protein sequence ID" value="ABF17919.1"/>
    <property type="molecule type" value="mRNA"/>
</dbReference>
<dbReference type="RefSeq" id="NP_650146.1">
    <property type="nucleotide sequence ID" value="NM_141889.4"/>
</dbReference>
<dbReference type="SMR" id="Q9VGE2"/>
<dbReference type="ComplexPortal" id="CPX-2644">
    <property type="entry name" value="SAGA complex"/>
</dbReference>
<dbReference type="FunCoup" id="Q9VGE2">
    <property type="interactions" value="367"/>
</dbReference>
<dbReference type="IntAct" id="Q9VGE2">
    <property type="interactions" value="1"/>
</dbReference>
<dbReference type="MINT" id="Q9VGE2"/>
<dbReference type="STRING" id="7227.FBpp0082011"/>
<dbReference type="PaxDb" id="7227-FBpp0082011"/>
<dbReference type="DNASU" id="41461"/>
<dbReference type="EnsemblMetazoa" id="FBtr0082537">
    <property type="protein sequence ID" value="FBpp0082011"/>
    <property type="gene ID" value="FBgn0037981"/>
</dbReference>
<dbReference type="GeneID" id="41461"/>
<dbReference type="KEGG" id="dme:Dmel_CG3169"/>
<dbReference type="UCSC" id="CG3169-RA">
    <property type="organism name" value="d. melanogaster"/>
</dbReference>
<dbReference type="AGR" id="FB:FBgn0037981"/>
<dbReference type="CTD" id="41461"/>
<dbReference type="FlyBase" id="FBgn0037981">
    <property type="gene designation" value="Spt3"/>
</dbReference>
<dbReference type="VEuPathDB" id="VectorBase:FBgn0037981"/>
<dbReference type="eggNOG" id="KOG3902">
    <property type="taxonomic scope" value="Eukaryota"/>
</dbReference>
<dbReference type="GeneTree" id="ENSGT00390000010738"/>
<dbReference type="HOGENOM" id="CLU_061312_2_0_1"/>
<dbReference type="OMA" id="QFMFNEQ"/>
<dbReference type="OrthoDB" id="66982at2759"/>
<dbReference type="BioGRID-ORCS" id="41461">
    <property type="hits" value="0 hits in 1 CRISPR screen"/>
</dbReference>
<dbReference type="Proteomes" id="UP000000803">
    <property type="component" value="Chromosome 3R"/>
</dbReference>
<dbReference type="Bgee" id="FBgn0037981">
    <property type="expression patterns" value="Expressed in T neuron T5d (Drosophila) in embryonic/larval optic lobe (Drosophila) and 40 other cell types or tissues"/>
</dbReference>
<dbReference type="ExpressionAtlas" id="Q8I8U9">
    <property type="expression patterns" value="baseline and differential"/>
</dbReference>
<dbReference type="GO" id="GO:0000123">
    <property type="term" value="C:histone acetyltransferase complex"/>
    <property type="evidence" value="ECO:0000250"/>
    <property type="project" value="FlyBase"/>
</dbReference>
<dbReference type="GO" id="GO:0005634">
    <property type="term" value="C:nucleus"/>
    <property type="evidence" value="ECO:0000314"/>
    <property type="project" value="FlyBase"/>
</dbReference>
<dbReference type="GO" id="GO:0000124">
    <property type="term" value="C:SAGA complex"/>
    <property type="evidence" value="ECO:0000314"/>
    <property type="project" value="FlyBase"/>
</dbReference>
<dbReference type="GO" id="GO:0046982">
    <property type="term" value="F:protein heterodimerization activity"/>
    <property type="evidence" value="ECO:0007669"/>
    <property type="project" value="InterPro"/>
</dbReference>
<dbReference type="GO" id="GO:0003713">
    <property type="term" value="F:transcription coactivator activity"/>
    <property type="evidence" value="ECO:0000318"/>
    <property type="project" value="GO_Central"/>
</dbReference>
<dbReference type="GO" id="GO:0006366">
    <property type="term" value="P:transcription by RNA polymerase II"/>
    <property type="evidence" value="ECO:0007669"/>
    <property type="project" value="InterPro"/>
</dbReference>
<dbReference type="CDD" id="cd07978">
    <property type="entry name" value="HFD_TAF13"/>
    <property type="match status" value="1"/>
</dbReference>
<dbReference type="Gene3D" id="1.10.20.10">
    <property type="entry name" value="Histone, subunit A"/>
    <property type="match status" value="1"/>
</dbReference>
<dbReference type="InterPro" id="IPR009072">
    <property type="entry name" value="Histone-fold"/>
</dbReference>
<dbReference type="InterPro" id="IPR003195">
    <property type="entry name" value="TFIID_TAF13"/>
</dbReference>
<dbReference type="PANTHER" id="PTHR11380">
    <property type="entry name" value="TRANSCRIPTION INITIATION FACTOR TFIID/SUPT3-RELATED"/>
    <property type="match status" value="1"/>
</dbReference>
<dbReference type="PANTHER" id="PTHR11380:SF16">
    <property type="entry name" value="TRANSCRIPTION INITIATION PROTEIN SPT3 HOMOLOG"/>
    <property type="match status" value="1"/>
</dbReference>
<dbReference type="Pfam" id="PF02269">
    <property type="entry name" value="TFIID-18kDa"/>
    <property type="match status" value="1"/>
</dbReference>
<dbReference type="SUPFAM" id="SSF47113">
    <property type="entry name" value="Histone-fold"/>
    <property type="match status" value="1"/>
</dbReference>
<comment type="function">
    <text evidence="1 2 3 4 5 6 7">Component of the transcription regulatory complex SAGA, a multiprotein complex that activates transcription by remodeling chromatin and mediating histone acetylation and deubiquitination (PubMed:12697829, PubMed:16980620, PubMed:18188155, PubMed:21764853, PubMed:24493646, PubMed:30559249). The SAGA complex predominantly acetylates histone H3 (PubMed:12697829, PubMed:30559249). Required for oogenesis; involved in transcriptional activation (PubMed:34807910).</text>
</comment>
<comment type="subunit">
    <text evidence="1 2 3 4 5 6">Component of the Spt-Ada-Gcn5 acetyltransferase (SAGA) complex consisting of wda/Taf5L, Saf6, Taf9, Taf10b, Taf12, Ada1, Spt3, Spt7, Spt20, Sf3b3, Sf3b5, Nipped-A/Tra1, a histone acetyltransferase (HAT) module made up of Gcn5, Ada2b (Isoform B), Ada3 and Sgf29, and a deubiquitinase (DUB) module made up of not/nonstop, Sgf11 and e(y)2 tethered to SAGA by Atxn7 (PubMed:12697829, PubMed:16980620, PubMed:18188155, PubMed:21764853, PubMed:24493646, PubMed:30559249). Taf5 and Taf10, which has partially redundant properties with Taf10b, may also be part of this complex (PubMed:12697829).</text>
</comment>
<comment type="subcellular location">
    <subcellularLocation>
        <location evidence="2 5">Nucleus</location>
    </subcellularLocation>
    <subcellularLocation>
        <location evidence="7">Chromosome</location>
    </subcellularLocation>
    <text evidence="7">As part of the SAGA complex associates with chromosomes near the transcriptional start site, matching the distribution of RNA polymerase II.</text>
</comment>
<comment type="developmental stage">
    <text evidence="1 4">Expressed both maternally and zygotically throughout development (at protein level); high levels of maternally loaded protein is present at the blastoderm stage (PubMed:12697829). Expression in adult males is reduced compared to females (at protein level) (PubMed:12697829). Expressed in embryonic muscle and neuronal cells (at protein level) (PubMed:21764853).</text>
</comment>
<comment type="disruption phenotype">
    <text evidence="7">RNAi-mediated knockdown in female germ line cells results in arrested oogenesis at stage 6-7.</text>
</comment>
<comment type="similarity">
    <text evidence="8">Belongs to the SPT3 family.</text>
</comment>
<comment type="sequence caution" evidence="8">
    <conflict type="erroneous initiation">
        <sequence resource="EMBL-CDS" id="AAN52143"/>
    </conflict>
    <text>Extended N-terminus.</text>
</comment>
<keyword id="KW-0158">Chromosome</keyword>
<keyword id="KW-0539">Nucleus</keyword>
<keyword id="KW-1185">Reference proteome</keyword>
<keyword id="KW-0804">Transcription</keyword>
<keyword id="KW-0805">Transcription regulation</keyword>
<feature type="chain" id="PRO_0000462578" description="SAGA complex subunit Spt3">
    <location>
        <begin position="1"/>
        <end position="384"/>
    </location>
</feature>
<protein>
    <recommendedName>
        <fullName evidence="8">SAGA complex subunit Spt3</fullName>
    </recommendedName>
    <alternativeName>
        <fullName evidence="8">Suppressor of Ty protein 3 homolog</fullName>
    </alternativeName>
</protein>
<proteinExistence type="evidence at protein level"/>
<evidence type="ECO:0000269" key="1">
    <source>
    </source>
</evidence>
<evidence type="ECO:0000269" key="2">
    <source>
    </source>
</evidence>
<evidence type="ECO:0000269" key="3">
    <source>
    </source>
</evidence>
<evidence type="ECO:0000269" key="4">
    <source>
    </source>
</evidence>
<evidence type="ECO:0000269" key="5">
    <source>
    </source>
</evidence>
<evidence type="ECO:0000269" key="6">
    <source>
    </source>
</evidence>
<evidence type="ECO:0000269" key="7">
    <source>
    </source>
</evidence>
<evidence type="ECO:0000305" key="8"/>
<evidence type="ECO:0000312" key="9">
    <source>
        <dbReference type="EMBL" id="AAN52143.1"/>
    </source>
</evidence>
<evidence type="ECO:0000312" key="10">
    <source>
        <dbReference type="EMBL" id="ABF17919.1"/>
    </source>
</evidence>
<evidence type="ECO:0000312" key="11">
    <source>
        <dbReference type="FlyBase" id="FBgn0037981"/>
    </source>
</evidence>
<evidence type="ECO:0000312" key="12">
    <source>
        <dbReference type="Proteomes" id="UP000000803"/>
    </source>
</evidence>
<sequence>MNYNAKRVMRQNSVCVGSNDMAASPIMIGPAPPSAPSTPQLQTTEDIKPLLVQRQVILLQSGSIPTNPSPQQINLAGHNVAGGASGSNVANVLIPDDAPVSLLTEIADIMRSFGDSDQPRTGSVKLVEQILQQQLRGIFNEASLVAMRRKQNPCPSQADFEFLMRNHPVKIARMRKHLKDMRILKRFLSIRTGRPQDFMDDLEQQEEDEELAIDVYELHDEDRMRRLFRADRISQILTGQQYLEFNEARKTSFYCRHGEKIKNKFRRFLDLPADLRIPTPTMNILAYLAHETIAAIVDYSILTRLNSDNRATEPYSRVTSAGGSPAMMHVCPEVTQGRGMEVVKPISVPEIHEAMRRFRQMSSRKIGRYRNSCDIDFRRSFLAI</sequence>
<reference evidence="9" key="1">
    <citation type="journal article" date="2003" name="Mol. Cell. Biol.">
        <title>Two Drosophila Ada2 homologues function in different multiprotein complexes.</title>
        <authorList>
            <person name="Kusch T."/>
            <person name="Guelman S."/>
            <person name="Abmayr S.M."/>
            <person name="Workman J.L."/>
        </authorList>
    </citation>
    <scope>NUCLEOTIDE SEQUENCE [MRNA]</scope>
    <scope>FUNCTION</scope>
    <scope>INTERACTION WITH ADA2B; GCN5; ADA3; TAF5; TAF9 AND TAF10</scope>
    <scope>DEVELOPMENTAL STAGE</scope>
</reference>
<reference evidence="12" key="2">
    <citation type="journal article" date="2000" name="Science">
        <title>The genome sequence of Drosophila melanogaster.</title>
        <authorList>
            <person name="Adams M.D."/>
            <person name="Celniker S.E."/>
            <person name="Holt R.A."/>
            <person name="Evans C.A."/>
            <person name="Gocayne J.D."/>
            <person name="Amanatides P.G."/>
            <person name="Scherer S.E."/>
            <person name="Li P.W."/>
            <person name="Hoskins R.A."/>
            <person name="Galle R.F."/>
            <person name="George R.A."/>
            <person name="Lewis S.E."/>
            <person name="Richards S."/>
            <person name="Ashburner M."/>
            <person name="Henderson S.N."/>
            <person name="Sutton G.G."/>
            <person name="Wortman J.R."/>
            <person name="Yandell M.D."/>
            <person name="Zhang Q."/>
            <person name="Chen L.X."/>
            <person name="Brandon R.C."/>
            <person name="Rogers Y.-H.C."/>
            <person name="Blazej R.G."/>
            <person name="Champe M."/>
            <person name="Pfeiffer B.D."/>
            <person name="Wan K.H."/>
            <person name="Doyle C."/>
            <person name="Baxter E.G."/>
            <person name="Helt G."/>
            <person name="Nelson C.R."/>
            <person name="Miklos G.L.G."/>
            <person name="Abril J.F."/>
            <person name="Agbayani A."/>
            <person name="An H.-J."/>
            <person name="Andrews-Pfannkoch C."/>
            <person name="Baldwin D."/>
            <person name="Ballew R.M."/>
            <person name="Basu A."/>
            <person name="Baxendale J."/>
            <person name="Bayraktaroglu L."/>
            <person name="Beasley E.M."/>
            <person name="Beeson K.Y."/>
            <person name="Benos P.V."/>
            <person name="Berman B.P."/>
            <person name="Bhandari D."/>
            <person name="Bolshakov S."/>
            <person name="Borkova D."/>
            <person name="Botchan M.R."/>
            <person name="Bouck J."/>
            <person name="Brokstein P."/>
            <person name="Brottier P."/>
            <person name="Burtis K.C."/>
            <person name="Busam D.A."/>
            <person name="Butler H."/>
            <person name="Cadieu E."/>
            <person name="Center A."/>
            <person name="Chandra I."/>
            <person name="Cherry J.M."/>
            <person name="Cawley S."/>
            <person name="Dahlke C."/>
            <person name="Davenport L.B."/>
            <person name="Davies P."/>
            <person name="de Pablos B."/>
            <person name="Delcher A."/>
            <person name="Deng Z."/>
            <person name="Mays A.D."/>
            <person name="Dew I."/>
            <person name="Dietz S.M."/>
            <person name="Dodson K."/>
            <person name="Doup L.E."/>
            <person name="Downes M."/>
            <person name="Dugan-Rocha S."/>
            <person name="Dunkov B.C."/>
            <person name="Dunn P."/>
            <person name="Durbin K.J."/>
            <person name="Evangelista C.C."/>
            <person name="Ferraz C."/>
            <person name="Ferriera S."/>
            <person name="Fleischmann W."/>
            <person name="Fosler C."/>
            <person name="Gabrielian A.E."/>
            <person name="Garg N.S."/>
            <person name="Gelbart W.M."/>
            <person name="Glasser K."/>
            <person name="Glodek A."/>
            <person name="Gong F."/>
            <person name="Gorrell J.H."/>
            <person name="Gu Z."/>
            <person name="Guan P."/>
            <person name="Harris M."/>
            <person name="Harris N.L."/>
            <person name="Harvey D.A."/>
            <person name="Heiman T.J."/>
            <person name="Hernandez J.R."/>
            <person name="Houck J."/>
            <person name="Hostin D."/>
            <person name="Houston K.A."/>
            <person name="Howland T.J."/>
            <person name="Wei M.-H."/>
            <person name="Ibegwam C."/>
            <person name="Jalali M."/>
            <person name="Kalush F."/>
            <person name="Karpen G.H."/>
            <person name="Ke Z."/>
            <person name="Kennison J.A."/>
            <person name="Ketchum K.A."/>
            <person name="Kimmel B.E."/>
            <person name="Kodira C.D."/>
            <person name="Kraft C.L."/>
            <person name="Kravitz S."/>
            <person name="Kulp D."/>
            <person name="Lai Z."/>
            <person name="Lasko P."/>
            <person name="Lei Y."/>
            <person name="Levitsky A.A."/>
            <person name="Li J.H."/>
            <person name="Li Z."/>
            <person name="Liang Y."/>
            <person name="Lin X."/>
            <person name="Liu X."/>
            <person name="Mattei B."/>
            <person name="McIntosh T.C."/>
            <person name="McLeod M.P."/>
            <person name="McPherson D."/>
            <person name="Merkulov G."/>
            <person name="Milshina N.V."/>
            <person name="Mobarry C."/>
            <person name="Morris J."/>
            <person name="Moshrefi A."/>
            <person name="Mount S.M."/>
            <person name="Moy M."/>
            <person name="Murphy B."/>
            <person name="Murphy L."/>
            <person name="Muzny D.M."/>
            <person name="Nelson D.L."/>
            <person name="Nelson D.R."/>
            <person name="Nelson K.A."/>
            <person name="Nixon K."/>
            <person name="Nusskern D.R."/>
            <person name="Pacleb J.M."/>
            <person name="Palazzolo M."/>
            <person name="Pittman G.S."/>
            <person name="Pan S."/>
            <person name="Pollard J."/>
            <person name="Puri V."/>
            <person name="Reese M.G."/>
            <person name="Reinert K."/>
            <person name="Remington K."/>
            <person name="Saunders R.D.C."/>
            <person name="Scheeler F."/>
            <person name="Shen H."/>
            <person name="Shue B.C."/>
            <person name="Siden-Kiamos I."/>
            <person name="Simpson M."/>
            <person name="Skupski M.P."/>
            <person name="Smith T.J."/>
            <person name="Spier E."/>
            <person name="Spradling A.C."/>
            <person name="Stapleton M."/>
            <person name="Strong R."/>
            <person name="Sun E."/>
            <person name="Svirskas R."/>
            <person name="Tector C."/>
            <person name="Turner R."/>
            <person name="Venter E."/>
            <person name="Wang A.H."/>
            <person name="Wang X."/>
            <person name="Wang Z.-Y."/>
            <person name="Wassarman D.A."/>
            <person name="Weinstock G.M."/>
            <person name="Weissenbach J."/>
            <person name="Williams S.M."/>
            <person name="Woodage T."/>
            <person name="Worley K.C."/>
            <person name="Wu D."/>
            <person name="Yang S."/>
            <person name="Yao Q.A."/>
            <person name="Ye J."/>
            <person name="Yeh R.-F."/>
            <person name="Zaveri J.S."/>
            <person name="Zhan M."/>
            <person name="Zhang G."/>
            <person name="Zhao Q."/>
            <person name="Zheng L."/>
            <person name="Zheng X.H."/>
            <person name="Zhong F.N."/>
            <person name="Zhong W."/>
            <person name="Zhou X."/>
            <person name="Zhu S.C."/>
            <person name="Zhu X."/>
            <person name="Smith H.O."/>
            <person name="Gibbs R.A."/>
            <person name="Myers E.W."/>
            <person name="Rubin G.M."/>
            <person name="Venter J.C."/>
        </authorList>
    </citation>
    <scope>NUCLEOTIDE SEQUENCE [LARGE SCALE GENOMIC DNA]</scope>
    <source>
        <strain evidence="12">Berkeley</strain>
    </source>
</reference>
<reference evidence="12" key="3">
    <citation type="journal article" date="2002" name="Genome Biol.">
        <title>Annotation of the Drosophila melanogaster euchromatic genome: a systematic review.</title>
        <authorList>
            <person name="Misra S."/>
            <person name="Crosby M.A."/>
            <person name="Mungall C.J."/>
            <person name="Matthews B.B."/>
            <person name="Campbell K.S."/>
            <person name="Hradecky P."/>
            <person name="Huang Y."/>
            <person name="Kaminker J.S."/>
            <person name="Millburn G.H."/>
            <person name="Prochnik S.E."/>
            <person name="Smith C.D."/>
            <person name="Tupy J.L."/>
            <person name="Whitfield E.J."/>
            <person name="Bayraktaroglu L."/>
            <person name="Berman B.P."/>
            <person name="Bettencourt B.R."/>
            <person name="Celniker S.E."/>
            <person name="de Grey A.D.N.J."/>
            <person name="Drysdale R.A."/>
            <person name="Harris N.L."/>
            <person name="Richter J."/>
            <person name="Russo S."/>
            <person name="Schroeder A.J."/>
            <person name="Shu S.Q."/>
            <person name="Stapleton M."/>
            <person name="Yamada C."/>
            <person name="Ashburner M."/>
            <person name="Gelbart W.M."/>
            <person name="Rubin G.M."/>
            <person name="Lewis S.E."/>
        </authorList>
    </citation>
    <scope>GENOME REANNOTATION</scope>
    <source>
        <strain evidence="12">Berkeley</strain>
    </source>
</reference>
<reference evidence="10" key="4">
    <citation type="submission" date="2006-10" db="EMBL/GenBank/DDBJ databases">
        <authorList>
            <person name="Stapleton M."/>
            <person name="Carlson J."/>
            <person name="Frise E."/>
            <person name="Kapadia B."/>
            <person name="Park S."/>
            <person name="Wan K."/>
            <person name="Yu C."/>
            <person name="Celniker S."/>
        </authorList>
    </citation>
    <scope>NUCLEOTIDE SEQUENCE [LARGE SCALE MRNA]</scope>
</reference>
<reference evidence="8" key="5">
    <citation type="journal article" date="2006" name="Mol. Cell. Biol.">
        <title>The essential gene wda encodes a WD40 repeat subunit of Drosophila SAGA required for histone H3 acetylation.</title>
        <authorList>
            <person name="Guelman S."/>
            <person name="Suganuma T."/>
            <person name="Florens L."/>
            <person name="Weake V."/>
            <person name="Swanson S.K."/>
            <person name="Washburn M.P."/>
            <person name="Abmayr S.M."/>
            <person name="Workman J.L."/>
        </authorList>
    </citation>
    <scope>FUNCTION</scope>
    <scope>IDENTIFICATION IN SAGA COMPLEX</scope>
    <scope>INTERACTION WITH GCN5; ADA2B; WDA AND ADA1-2</scope>
    <scope>SUBCELLULAR LOCATION</scope>
    <scope>IDENTIFICATION BY MASS SPECTROMETRY</scope>
</reference>
<reference evidence="8" key="6">
    <citation type="journal article" date="2008" name="EMBO J.">
        <title>SAGA-mediated H2B deubiquitination controls the development of neuronal connectivity in the Drosophila visual system.</title>
        <authorList>
            <person name="Weake V.M."/>
            <person name="Lee K.K."/>
            <person name="Guelman S."/>
            <person name="Lin C.-H."/>
            <person name="Seidel C."/>
            <person name="Abmayr S.M."/>
            <person name="Workman J.L."/>
        </authorList>
    </citation>
    <scope>FUNCTION</scope>
    <scope>IDENTIFICATION IN THE SAGA COMPLEX</scope>
</reference>
<reference evidence="8" key="7">
    <citation type="journal article" date="2011" name="Genes Dev.">
        <title>Post-transcription initiation function of the ubiquitous SAGA complex in tissue-specific gene activation.</title>
        <authorList>
            <person name="Weake V.M."/>
            <person name="Dyer J.O."/>
            <person name="Seidel C."/>
            <person name="Box A."/>
            <person name="Swanson S.K."/>
            <person name="Peak A."/>
            <person name="Florens L."/>
            <person name="Washburn M.P."/>
            <person name="Abmayr S.M."/>
            <person name="Workman J.L."/>
        </authorList>
    </citation>
    <scope>FUNCTION</scope>
    <scope>IDENTIFICATION IN SAGA COMPLEX</scope>
    <scope>DEVELOPMENTAL STAGE</scope>
    <scope>IDENTIFICATION BY MASS SPECTROMETRY</scope>
</reference>
<reference evidence="8" key="8">
    <citation type="journal article" date="2014" name="Genes Dev.">
        <title>Loss of Drosophila Ataxin-7, a SAGA subunit, reduces H2B ubiquitination and leads to neural and retinal degeneration.</title>
        <authorList>
            <person name="Mohan R.D."/>
            <person name="Dialynas G."/>
            <person name="Weake V.M."/>
            <person name="Liu J."/>
            <person name="Martin-Brown S."/>
            <person name="Florens L."/>
            <person name="Washburn M.P."/>
            <person name="Workman J.L."/>
            <person name="Abmayr S.M."/>
        </authorList>
    </citation>
    <scope>FUNCTION</scope>
    <scope>IDENTIFICATION IN THE SAGA COMPLEX</scope>
    <scope>SUBCELLULAR LOCATION</scope>
    <scope>IDENTIFICATION BY MASS SPECTROMETRY</scope>
</reference>
<reference evidence="8" key="9">
    <citation type="journal article" date="2019" name="J. Cell Sci.">
        <title>The Drosophila Dbf4 ortholog Chiffon forms a complex with Gcn5 that is necessary for histone acetylation and viability.</title>
        <authorList>
            <person name="Torres-Zelada E.F."/>
            <person name="Stephenson R.E."/>
            <person name="Alpsoy A."/>
            <person name="Anderson B.D."/>
            <person name="Swanson S.K."/>
            <person name="Florens L."/>
            <person name="Dykhuizen E.C."/>
            <person name="Washburn M.P."/>
            <person name="Weake V.M."/>
        </authorList>
    </citation>
    <scope>FUNCTION</scope>
    <scope>IDENTIFICATION IN THE SAGA COMPLEX</scope>
    <scope>IDENTIFICATION BY MASS SPECTROMETRY</scope>
</reference>
<reference evidence="8" key="10">
    <citation type="journal article" date="2021" name="PLoS Genet.">
        <title>The SAGA core module is critical during Drosophila oogenesis and is broadly recruited to promoters.</title>
        <authorList>
            <person name="Soffers J.H.M."/>
            <person name="Alcantara S.G."/>
            <person name="Li X."/>
            <person name="Shao W."/>
            <person name="Seidel C.W."/>
            <person name="Li H."/>
            <person name="Zeitlinger J."/>
            <person name="Abmayr S.M."/>
            <person name="Workman J.L."/>
        </authorList>
    </citation>
    <scope>FUNCTION</scope>
    <scope>SUBCELLULAR LOCATION</scope>
    <scope>DISRUPTION PHENOTYPE</scope>
</reference>
<name>SPT3_DROME</name>
<accession>Q9VGE2</accession>
<accession>Q8I8U9</accession>
<gene>
    <name evidence="11" type="primary">Spt3</name>
    <name evidence="11" type="ORF">CG3169</name>
</gene>